<keyword id="KW-0191">Covalent protein-RNA linkage</keyword>
<keyword id="KW-0342">GTP-binding</keyword>
<keyword id="KW-0547">Nucleotide-binding</keyword>
<keyword id="KW-0548">Nucleotidyltransferase</keyword>
<keyword id="KW-0597">Phosphoprotein</keyword>
<keyword id="KW-0696">RNA-directed RNA polymerase</keyword>
<keyword id="KW-0808">Transferase</keyword>
<keyword id="KW-0693">Viral RNA replication</keyword>
<keyword id="KW-0946">Virion</keyword>
<reference key="1">
    <citation type="journal article" date="1991" name="Virology">
        <title>Sequence analysis of infectious pancreatic necrosis virus genome segment B and its encoded VP1 protein: a putative RNA-dependent RNA polymerase lacking the Gly-Asp-Asp motif.</title>
        <authorList>
            <person name="Duncan R."/>
            <person name="Mason C.L."/>
            <person name="Nagy E."/>
            <person name="Leong J.-A."/>
            <person name="Dobos P."/>
        </authorList>
    </citation>
    <scope>NUCLEOTIDE SEQUENCE [GENOMIC RNA]</scope>
</reference>
<protein>
    <recommendedName>
        <fullName>RNA-directed RNA polymerase</fullName>
        <shortName>RDRP</shortName>
        <ecNumber>2.7.7.48</ecNumber>
    </recommendedName>
    <alternativeName>
        <fullName>Protein VP1</fullName>
    </alternativeName>
</protein>
<feature type="chain" id="PRO_0000221964" description="RNA-directed RNA polymerase">
    <location>
        <begin position="1"/>
        <end position="844"/>
    </location>
</feature>
<feature type="domain" description="RdRp catalytic" evidence="3">
    <location>
        <begin position="384"/>
        <end position="588"/>
    </location>
</feature>
<feature type="region of interest" description="Disordered" evidence="4">
    <location>
        <begin position="820"/>
        <end position="844"/>
    </location>
</feature>
<feature type="compositionally biased region" description="Basic residues" evidence="4">
    <location>
        <begin position="833"/>
        <end position="844"/>
    </location>
</feature>
<feature type="binding site" evidence="2">
    <location>
        <begin position="248"/>
        <end position="255"/>
    </location>
    <ligand>
        <name>GTP</name>
        <dbReference type="ChEBI" id="CHEBI:37565"/>
    </ligand>
</feature>
<evidence type="ECO:0000250" key="1"/>
<evidence type="ECO:0000255" key="2"/>
<evidence type="ECO:0000255" key="3">
    <source>
        <dbReference type="PROSITE-ProRule" id="PRU00539"/>
    </source>
</evidence>
<evidence type="ECO:0000256" key="4">
    <source>
        <dbReference type="SAM" id="MobiDB-lite"/>
    </source>
</evidence>
<sequence length="844" mass="94089">MSDIFNSPQNKASILNALMKSTQGDVEDVLIPKRFRPAKDPLDSPQAAAAFLKEHKYRILRPRAIPTMVEIETDAALPRLAAMVDDGKLKEMVNVPEGTTAFYPKYYPFHRPDHDDVGTFGAPDITLLKQLTFFLLENDFPTGPETLRQVREAIATLQYGSGSYSGQLNRLLAMKGVATGRNPNKTPLAVGYTNEQMARLMEQTLPINPPKNEDPDLRWAPSWLIQYTGDASTDKSYLPHVTAKSSAGLPYIGKTKGDTTAEALVLADSFIRDLGKAATSADPGAAAKKVLSDFWYLSCGLLFPKGERYTQKDWDLKTRNIWSAPYPTHLLLSMVSSPVMDESKLNITNTQTPSLYGFSPFHGGINRIMTIIREHLDQEQDLVMIYADNIYILQDNTWYSIDLEKGEANCTPQHMQAMMYYRLTREWTNEDGSPRYNPTWATFAMYVGPSMVVDSTCLLMNLQLKTTGQGSGNAFTFLNNHLMSTIVVAEWHKAGRPNPMSKEFMDLEAKTGINFKIERELKDLRSIIMEAVDTAPLDGYLADGSDLPPRVPGKAVELDLLGWSAVYSRQLEMFVPVLENERLIASVAYPKGLENKSLARKPGAEIAYQIVRYEAIRLIGGWNNPLIETAAKHMSLDKRKRLEVKGIDVTGFLDDWNTMSEFGGDLEGISLTAPLTNQTLLDINTPETEFDVKDRPPTPRSPGKTLAEVTAAITSGTYKDPKSAVWRLLDQRTKLRVSTLRDHAHALKPAASTSDFWGDATEELAEQQQLLMKANNLLKSSLTEAREALETVQSDKIISGKTSPEKNPGTAANPVVAYGEFSEKIPLTPTQKKNAKRREKQRRN</sequence>
<organism>
    <name type="scientific">Infectious pancreatic necrosis virus (strain Sp)</name>
    <name type="common">IPNV</name>
    <dbReference type="NCBI Taxonomy" id="11005"/>
    <lineage>
        <taxon>Viruses</taxon>
        <taxon>Riboviria</taxon>
        <taxon>Orthornavirae</taxon>
        <taxon>Birnaviridae</taxon>
        <taxon>Aquabirnavirus</taxon>
        <taxon>Aquabirnavirus salmonidae</taxon>
    </lineage>
</organism>
<gene>
    <name type="primary">VP1</name>
</gene>
<proteinExistence type="inferred from homology"/>
<name>RDRP_IPNVS</name>
<dbReference type="EC" id="2.7.7.48"/>
<dbReference type="EMBL" id="M58757">
    <property type="protein sequence ID" value="AAA46244.1"/>
    <property type="molecule type" value="Genomic_RNA"/>
</dbReference>
<dbReference type="PIR" id="B37946">
    <property type="entry name" value="RRXSSP"/>
</dbReference>
<dbReference type="SMR" id="P22174"/>
<dbReference type="Proteomes" id="UP000007213">
    <property type="component" value="Genome"/>
</dbReference>
<dbReference type="GO" id="GO:0044423">
    <property type="term" value="C:virion component"/>
    <property type="evidence" value="ECO:0007669"/>
    <property type="project" value="UniProtKB-KW"/>
</dbReference>
<dbReference type="GO" id="GO:0005525">
    <property type="term" value="F:GTP binding"/>
    <property type="evidence" value="ECO:0007669"/>
    <property type="project" value="UniProtKB-KW"/>
</dbReference>
<dbReference type="GO" id="GO:0003968">
    <property type="term" value="F:RNA-directed RNA polymerase activity"/>
    <property type="evidence" value="ECO:0007669"/>
    <property type="project" value="UniProtKB-KW"/>
</dbReference>
<dbReference type="GO" id="GO:0019079">
    <property type="term" value="P:viral genome replication"/>
    <property type="evidence" value="ECO:0007669"/>
    <property type="project" value="InterPro"/>
</dbReference>
<dbReference type="Gene3D" id="6.10.140.300">
    <property type="match status" value="1"/>
</dbReference>
<dbReference type="Gene3D" id="3.90.1730.10">
    <property type="entry name" value="Infectious bursal virus vp1 polymerase domain"/>
    <property type="match status" value="3"/>
</dbReference>
<dbReference type="Gene3D" id="1.20.1270.270">
    <property type="entry name" value="VP1, C-terminal extension domain"/>
    <property type="match status" value="1"/>
</dbReference>
<dbReference type="InterPro" id="IPR046750">
    <property type="entry name" value="Birnavirus_RdRp_C"/>
</dbReference>
<dbReference type="InterPro" id="IPR007100">
    <property type="entry name" value="Birnavirus_RdRp_palm"/>
</dbReference>
<dbReference type="InterPro" id="IPR046812">
    <property type="entry name" value="Birnavirus_RdRp_palm_sf"/>
</dbReference>
<dbReference type="InterPro" id="IPR046752">
    <property type="entry name" value="Birnavirus_RdRp_thumb"/>
</dbReference>
<dbReference type="InterPro" id="IPR046813">
    <property type="entry name" value="Birnavirus_RdRp_thumb_sf"/>
</dbReference>
<dbReference type="InterPro" id="IPR043502">
    <property type="entry name" value="DNA/RNA_pol_sf"/>
</dbReference>
<dbReference type="Pfam" id="PF20489">
    <property type="entry name" value="Birna_RdRp_C"/>
    <property type="match status" value="1"/>
</dbReference>
<dbReference type="Pfam" id="PF04197">
    <property type="entry name" value="Birna_RdRp_palm"/>
    <property type="match status" value="1"/>
</dbReference>
<dbReference type="Pfam" id="PF20488">
    <property type="entry name" value="Birna_VP1_thumb"/>
    <property type="match status" value="1"/>
</dbReference>
<dbReference type="SUPFAM" id="SSF56672">
    <property type="entry name" value="DNA/RNA polymerases"/>
    <property type="match status" value="1"/>
</dbReference>
<dbReference type="PROSITE" id="PS50524">
    <property type="entry name" value="RDRP_DSRNA_BIR"/>
    <property type="match status" value="1"/>
</dbReference>
<comment type="function">
    <text evidence="1">RNA-dependent RNA polymerase which is found both free and covalently attached to the genomic RNA. May also contain guanylyl and methyl transferase activities (By similarity).</text>
</comment>
<comment type="catalytic activity">
    <reaction evidence="3">
        <text>RNA(n) + a ribonucleoside 5'-triphosphate = RNA(n+1) + diphosphate</text>
        <dbReference type="Rhea" id="RHEA:21248"/>
        <dbReference type="Rhea" id="RHEA-COMP:14527"/>
        <dbReference type="Rhea" id="RHEA-COMP:17342"/>
        <dbReference type="ChEBI" id="CHEBI:33019"/>
        <dbReference type="ChEBI" id="CHEBI:61557"/>
        <dbReference type="ChEBI" id="CHEBI:140395"/>
        <dbReference type="EC" id="2.7.7.48"/>
    </reaction>
</comment>
<comment type="subunit">
    <text evidence="1">Interacts with VP3 in the cytoplasm.</text>
</comment>
<comment type="subcellular location">
    <subcellularLocation>
        <location evidence="1">Virion</location>
    </subcellularLocation>
    <text evidence="1">Minor amounts are incorporated in the virion.</text>
</comment>
<comment type="PTM">
    <text>Exists in multiple phosphorylated forms.</text>
</comment>
<organismHost>
    <name type="scientific">Oncorhynchus mykiss</name>
    <name type="common">Rainbow trout</name>
    <name type="synonym">Salmo gairdneri</name>
    <dbReference type="NCBI Taxonomy" id="8022"/>
</organismHost>
<organismHost>
    <name type="scientific">Salmo</name>
    <dbReference type="NCBI Taxonomy" id="8028"/>
</organismHost>
<accession>P22174</accession>